<protein>
    <recommendedName>
        <fullName>Ethanolamine-phosphate cytidylyltransferase</fullName>
        <ecNumber evidence="5">2.7.7.14</ecNumber>
    </recommendedName>
    <alternativeName>
        <fullName>CTP:phosphoethanolamine cytidylyltransferase</fullName>
    </alternativeName>
    <alternativeName>
        <fullName>Phosphorylethanolamine transferase</fullName>
    </alternativeName>
</protein>
<comment type="function">
    <text evidence="5 6">Ethanolamine-phosphate cytidylyltransferase that catalyzes the second step in the synthesis of phosphatidylethanolamine (PE) from ethanolamine via the CDP-ethanolamine pathway (PubMed:17325045). Phosphatidylethanolamine is a dominant inner-leaflet phospholipid in cell membranes, where it plays a role in membrane function by structurally stabilizing membrane-anchored proteins, and participates in important cellular processes such as cell division, cell fusion, blood coagulation, and apoptosis (PubMed:17325045).</text>
</comment>
<comment type="catalytic activity">
    <reaction evidence="5">
        <text>phosphoethanolamine + CTP + H(+) = CDP-ethanolamine + diphosphate</text>
        <dbReference type="Rhea" id="RHEA:24592"/>
        <dbReference type="ChEBI" id="CHEBI:15378"/>
        <dbReference type="ChEBI" id="CHEBI:33019"/>
        <dbReference type="ChEBI" id="CHEBI:37563"/>
        <dbReference type="ChEBI" id="CHEBI:57876"/>
        <dbReference type="ChEBI" id="CHEBI:58190"/>
        <dbReference type="EC" id="2.7.7.14"/>
    </reaction>
    <physiologicalReaction direction="left-to-right" evidence="5">
        <dbReference type="Rhea" id="RHEA:24593"/>
    </physiologicalReaction>
</comment>
<comment type="pathway">
    <text evidence="5">Phospholipid metabolism; phosphatidylethanolamine biosynthesis; phosphatidylethanolamine from ethanolamine: step 2/3.</text>
</comment>
<comment type="disruption phenotype">
    <text evidence="5">Homozygous knockout embryos die after implantation, prior to embryonic day 8.5.</text>
</comment>
<comment type="similarity">
    <text evidence="7">Belongs to the cytidylyltransferase family.</text>
</comment>
<gene>
    <name type="primary">Pcyt2</name>
</gene>
<sequence length="404" mass="45235">MIRNGHGAASAAGLKGPGDQRIVRVWCDGCYDMVHYGHSNQLRQARAMGDYLIVGVHTDEEIAKHKGPPVFTQEERYKMVQAIKWVDEVVPAAPYVTTLETLDKHNCDFCVHGNDITLTVDGRDTYEEVKQAGRYRECKRTQGVSTTDLVGRMLLVTKAHHSSQEMSSEYREYADSFGKPPHPTPAGDTLSSEVSSQCPGGQSPWTGVSQFLQTSQKIIQFASGKEPQPGETVIYVAGAFDLFHIGHVDFLQEVHKLAKRPYVIAGLHFDQEVNRYKGKNYPIMNLHERTLSVLACRYVSEVVIGAPYSVTAELLNHFKVDLVCHGKTEIVPDRDGSDPYQEPKRRGIFYQIDSGSDLTTDLIVQRIIKNRLEYEARNQKKEAKELAFLEATKQQEAPPGGEID</sequence>
<keyword id="KW-0444">Lipid biosynthesis</keyword>
<keyword id="KW-0443">Lipid metabolism</keyword>
<keyword id="KW-0548">Nucleotidyltransferase</keyword>
<keyword id="KW-0594">Phospholipid biosynthesis</keyword>
<keyword id="KW-1208">Phospholipid metabolism</keyword>
<keyword id="KW-0597">Phosphoprotein</keyword>
<keyword id="KW-1185">Reference proteome</keyword>
<keyword id="KW-0808">Transferase</keyword>
<name>PCY2_MOUSE</name>
<proteinExistence type="evidence at protein level"/>
<organism>
    <name type="scientific">Mus musculus</name>
    <name type="common">Mouse</name>
    <dbReference type="NCBI Taxonomy" id="10090"/>
    <lineage>
        <taxon>Eukaryota</taxon>
        <taxon>Metazoa</taxon>
        <taxon>Chordata</taxon>
        <taxon>Craniata</taxon>
        <taxon>Vertebrata</taxon>
        <taxon>Euteleostomi</taxon>
        <taxon>Mammalia</taxon>
        <taxon>Eutheria</taxon>
        <taxon>Euarchontoglires</taxon>
        <taxon>Glires</taxon>
        <taxon>Rodentia</taxon>
        <taxon>Myomorpha</taxon>
        <taxon>Muroidea</taxon>
        <taxon>Muridae</taxon>
        <taxon>Murinae</taxon>
        <taxon>Mus</taxon>
        <taxon>Mus</taxon>
    </lineage>
</organism>
<reference key="1">
    <citation type="journal article" date="2004" name="Genome Res.">
        <title>The status, quality, and expansion of the NIH full-length cDNA project: the Mammalian Gene Collection (MGC).</title>
        <authorList>
            <consortium name="The MGC Project Team"/>
        </authorList>
    </citation>
    <scope>NUCLEOTIDE SEQUENCE [LARGE SCALE MRNA]</scope>
</reference>
<reference key="2">
    <citation type="journal article" date="2007" name="Mol. Cell. Biol.">
        <title>Developmental and metabolic effects of disruption of the mouse CTP:phosphoethanolamine cytidylyltransferase gene (Pcyt2).</title>
        <authorList>
            <person name="Fullerton M.D."/>
            <person name="Hakimuddin F."/>
            <person name="Bakovic M."/>
        </authorList>
    </citation>
    <scope>FUNCTION</scope>
    <scope>CATALYTIC ACTIVITY</scope>
    <scope>PATHWAY</scope>
    <scope>DISRUPTION PHENOTYPE</scope>
</reference>
<reference key="3">
    <citation type="journal article" date="2010" name="Cell">
        <title>A tissue-specific atlas of mouse protein phosphorylation and expression.</title>
        <authorList>
            <person name="Huttlin E.L."/>
            <person name="Jedrychowski M.P."/>
            <person name="Elias J.E."/>
            <person name="Goswami T."/>
            <person name="Rad R."/>
            <person name="Beausoleil S.A."/>
            <person name="Villen J."/>
            <person name="Haas W."/>
            <person name="Sowa M.E."/>
            <person name="Gygi S.P."/>
        </authorList>
    </citation>
    <scope>IDENTIFICATION BY MASS SPECTROMETRY [LARGE SCALE ANALYSIS]</scope>
    <source>
        <tissue>Brain</tissue>
        <tissue>Brown adipose tissue</tissue>
        <tissue>Heart</tissue>
        <tissue>Kidney</tissue>
        <tissue>Liver</tissue>
        <tissue>Lung</tissue>
        <tissue>Pancreas</tissue>
        <tissue>Spleen</tissue>
        <tissue>Testis</tissue>
    </source>
</reference>
<feature type="chain" id="PRO_0000208462" description="Ethanolamine-phosphate cytidylyltransferase">
    <location>
        <begin position="1"/>
        <end position="404"/>
    </location>
</feature>
<feature type="region of interest" description="Disordered" evidence="4">
    <location>
        <begin position="173"/>
        <end position="201"/>
    </location>
</feature>
<feature type="compositionally biased region" description="Polar residues" evidence="4">
    <location>
        <begin position="189"/>
        <end position="201"/>
    </location>
</feature>
<feature type="binding site" evidence="1">
    <location>
        <begin position="239"/>
        <end position="240"/>
    </location>
    <ligand>
        <name>CTP</name>
        <dbReference type="ChEBI" id="CHEBI:37563"/>
    </ligand>
</feature>
<feature type="binding site" evidence="1">
    <location>
        <begin position="247"/>
        <end position="250"/>
    </location>
    <ligand>
        <name>CTP</name>
        <dbReference type="ChEBI" id="CHEBI:37563"/>
    </ligand>
</feature>
<feature type="binding site" evidence="1">
    <location>
        <position position="277"/>
    </location>
    <ligand>
        <name>CTP</name>
        <dbReference type="ChEBI" id="CHEBI:37563"/>
    </ligand>
</feature>
<feature type="binding site" evidence="1">
    <location>
        <begin position="325"/>
        <end position="328"/>
    </location>
    <ligand>
        <name>CTP</name>
        <dbReference type="ChEBI" id="CHEBI:37563"/>
    </ligand>
</feature>
<feature type="binding site" evidence="1">
    <location>
        <begin position="354"/>
        <end position="358"/>
    </location>
    <ligand>
        <name>CTP</name>
        <dbReference type="ChEBI" id="CHEBI:37563"/>
    </ligand>
</feature>
<feature type="modified residue" description="Phosphoserine" evidence="3">
    <location>
        <position position="356"/>
    </location>
</feature>
<feature type="modified residue" description="Phosphothreonine" evidence="3">
    <location>
        <position position="359"/>
    </location>
</feature>
<feature type="modified residue" description="Phosphothreonine" evidence="2">
    <location>
        <position position="360"/>
    </location>
</feature>
<feature type="sequence conflict" description="In Ref. 1; AAH03473." evidence="7" ref="1">
    <original>C</original>
    <variation>S</variation>
    <location>
        <position position="110"/>
    </location>
</feature>
<evidence type="ECO:0000250" key="1"/>
<evidence type="ECO:0000250" key="2">
    <source>
        <dbReference type="UniProtKB" id="O88637"/>
    </source>
</evidence>
<evidence type="ECO:0000250" key="3">
    <source>
        <dbReference type="UniProtKB" id="Q99447"/>
    </source>
</evidence>
<evidence type="ECO:0000256" key="4">
    <source>
        <dbReference type="SAM" id="MobiDB-lite"/>
    </source>
</evidence>
<evidence type="ECO:0000269" key="5">
    <source>
    </source>
</evidence>
<evidence type="ECO:0000303" key="6">
    <source>
    </source>
</evidence>
<evidence type="ECO:0000305" key="7"/>
<accession>Q922E4</accession>
<accession>Q99J50</accession>
<dbReference type="EC" id="2.7.7.14" evidence="5"/>
<dbReference type="EMBL" id="BC003473">
    <property type="protein sequence ID" value="AAH03473.1"/>
    <property type="molecule type" value="mRNA"/>
</dbReference>
<dbReference type="EMBL" id="BC008276">
    <property type="protein sequence ID" value="AAH08276.1"/>
    <property type="molecule type" value="mRNA"/>
</dbReference>
<dbReference type="CCDS" id="CCDS25747.1"/>
<dbReference type="RefSeq" id="NP_077191.2">
    <property type="nucleotide sequence ID" value="NM_024229.2"/>
</dbReference>
<dbReference type="SMR" id="Q922E4"/>
<dbReference type="BioGRID" id="212982">
    <property type="interactions" value="5"/>
</dbReference>
<dbReference type="FunCoup" id="Q922E4">
    <property type="interactions" value="2032"/>
</dbReference>
<dbReference type="STRING" id="10090.ENSMUSP00000026129"/>
<dbReference type="GlyGen" id="Q922E4">
    <property type="glycosylation" value="1 site"/>
</dbReference>
<dbReference type="iPTMnet" id="Q922E4"/>
<dbReference type="PhosphoSitePlus" id="Q922E4"/>
<dbReference type="SwissPalm" id="Q922E4"/>
<dbReference type="jPOST" id="Q922E4"/>
<dbReference type="PaxDb" id="10090-ENSMUSP00000026129"/>
<dbReference type="ProteomicsDB" id="287981"/>
<dbReference type="Pumba" id="Q922E4"/>
<dbReference type="Antibodypedia" id="19846">
    <property type="antibodies" value="135 antibodies from 25 providers"/>
</dbReference>
<dbReference type="DNASU" id="68671"/>
<dbReference type="Ensembl" id="ENSMUST00000026129.16">
    <property type="protein sequence ID" value="ENSMUSP00000026129.10"/>
    <property type="gene ID" value="ENSMUSG00000025137.16"/>
</dbReference>
<dbReference type="GeneID" id="68671"/>
<dbReference type="KEGG" id="mmu:68671"/>
<dbReference type="UCSC" id="uc007mtp.1">
    <property type="organism name" value="mouse"/>
</dbReference>
<dbReference type="AGR" id="MGI:1915921"/>
<dbReference type="CTD" id="5833"/>
<dbReference type="MGI" id="MGI:1915921">
    <property type="gene designation" value="Pcyt2"/>
</dbReference>
<dbReference type="VEuPathDB" id="HostDB:ENSMUSG00000025137"/>
<dbReference type="eggNOG" id="KOG2803">
    <property type="taxonomic scope" value="Eukaryota"/>
</dbReference>
<dbReference type="GeneTree" id="ENSGT00550000075065"/>
<dbReference type="InParanoid" id="Q922E4"/>
<dbReference type="OMA" id="QCKYINA"/>
<dbReference type="OrthoDB" id="40021at2759"/>
<dbReference type="PhylomeDB" id="Q922E4"/>
<dbReference type="TreeFam" id="TF106337"/>
<dbReference type="BRENDA" id="2.7.7.14">
    <property type="organism ID" value="3474"/>
</dbReference>
<dbReference type="Reactome" id="R-MMU-1483213">
    <property type="pathway name" value="Synthesis of PE"/>
</dbReference>
<dbReference type="UniPathway" id="UPA00558">
    <property type="reaction ID" value="UER00742"/>
</dbReference>
<dbReference type="BioGRID-ORCS" id="68671">
    <property type="hits" value="23 hits in 81 CRISPR screens"/>
</dbReference>
<dbReference type="ChiTaRS" id="Pcyt2">
    <property type="organism name" value="mouse"/>
</dbReference>
<dbReference type="PRO" id="PR:Q922E4"/>
<dbReference type="Proteomes" id="UP000000589">
    <property type="component" value="Chromosome 11"/>
</dbReference>
<dbReference type="RNAct" id="Q922E4">
    <property type="molecule type" value="protein"/>
</dbReference>
<dbReference type="Bgee" id="ENSMUSG00000025137">
    <property type="expression patterns" value="Expressed in left lobe of liver and 276 other cell types or tissues"/>
</dbReference>
<dbReference type="ExpressionAtlas" id="Q922E4">
    <property type="expression patterns" value="baseline and differential"/>
</dbReference>
<dbReference type="GO" id="GO:0004306">
    <property type="term" value="F:ethanolamine-phosphate cytidylyltransferase activity"/>
    <property type="evidence" value="ECO:0000315"/>
    <property type="project" value="UniProtKB"/>
</dbReference>
<dbReference type="GO" id="GO:0006646">
    <property type="term" value="P:phosphatidylethanolamine biosynthetic process"/>
    <property type="evidence" value="ECO:0000315"/>
    <property type="project" value="UniProtKB"/>
</dbReference>
<dbReference type="CDD" id="cd02174">
    <property type="entry name" value="CCT"/>
    <property type="match status" value="1"/>
</dbReference>
<dbReference type="CDD" id="cd02173">
    <property type="entry name" value="ECT"/>
    <property type="match status" value="1"/>
</dbReference>
<dbReference type="FunFam" id="3.40.50.620:FF:000088">
    <property type="entry name" value="Ethanolamine-phosphate cytidylyltransferase isoform 2"/>
    <property type="match status" value="1"/>
</dbReference>
<dbReference type="FunFam" id="3.40.50.620:FF:000108">
    <property type="entry name" value="Ethanolamine-phosphate cytidylyltransferase isoform 2"/>
    <property type="match status" value="1"/>
</dbReference>
<dbReference type="Gene3D" id="3.40.50.620">
    <property type="entry name" value="HUPs"/>
    <property type="match status" value="2"/>
</dbReference>
<dbReference type="InterPro" id="IPR041723">
    <property type="entry name" value="CCT"/>
</dbReference>
<dbReference type="InterPro" id="IPR004821">
    <property type="entry name" value="Cyt_trans-like"/>
</dbReference>
<dbReference type="InterPro" id="IPR044608">
    <property type="entry name" value="Ect1/PCYT2"/>
</dbReference>
<dbReference type="InterPro" id="IPR014729">
    <property type="entry name" value="Rossmann-like_a/b/a_fold"/>
</dbReference>
<dbReference type="NCBIfam" id="TIGR00125">
    <property type="entry name" value="cyt_tran_rel"/>
    <property type="match status" value="2"/>
</dbReference>
<dbReference type="PANTHER" id="PTHR45780">
    <property type="entry name" value="ETHANOLAMINE-PHOSPHATE CYTIDYLYLTRANSFERASE"/>
    <property type="match status" value="1"/>
</dbReference>
<dbReference type="PANTHER" id="PTHR45780:SF2">
    <property type="entry name" value="ETHANOLAMINE-PHOSPHATE CYTIDYLYLTRANSFERASE"/>
    <property type="match status" value="1"/>
</dbReference>
<dbReference type="Pfam" id="PF01467">
    <property type="entry name" value="CTP_transf_like"/>
    <property type="match status" value="2"/>
</dbReference>
<dbReference type="SUPFAM" id="SSF52374">
    <property type="entry name" value="Nucleotidylyl transferase"/>
    <property type="match status" value="2"/>
</dbReference>